<comment type="function">
    <text evidence="1 5">May regulate the synthesis and function of lysosomes and of highly specialized organelles, such as melanosomes and platelet dense granules (By similarity). Acts as a cargo adapter for the dynein-dynactin motor complex to mediate the transport of lysosomes from the cell periphery to the perinuclear region. Facilitates retrograde lysosomal trafficking by linking the motor complex to lysosomes, and perinuclear positioning of lysosomes is crucial for the delivery of endocytic cargos to lysosomes, for lysosome maturation and functioning (PubMed:25189619).</text>
</comment>
<comment type="subunit">
    <text evidence="1 4 5">Component of the biogenesis of lysosome-related organelles complex-2 (or BLOC2) composed of HPS3, HPS5 and HPS6. Interacts with HPS5 and HPS3. Interacts with biogenesis of lysosome-related organelles complex-1 (BLOC1). Interacts with dynein intermediate chain (By similarity). Interacts with AP-3 complex (PubMed:19010779). Interacts with DCTN1 (PubMed:25189619).</text>
</comment>
<comment type="subcellular location">
    <subcellularLocation>
        <location evidence="1">Microsome membrane</location>
    </subcellularLocation>
    <subcellularLocation>
        <location evidence="1">Cytoplasm</location>
        <location evidence="1">Cytosol</location>
    </subcellularLocation>
    <subcellularLocation>
        <location evidence="1">Early endosome membrane</location>
    </subcellularLocation>
    <subcellularLocation>
        <location evidence="1">Lysosome membrane</location>
    </subcellularLocation>
</comment>
<comment type="tissue specificity">
    <text>Widely expressed, with lowest expression in skeletal muscle.</text>
</comment>
<comment type="disease">
    <text evidence="3">Defects in Hps6 are the cause of Hermansky-Pudlak-like syndrome, a syndrome characterized by hypopigmented eyes and coat, melanosomes greatly reduced in number and morphologically bizarre, kidney proximal tubules secreting lysosomal enzymes into urine at greatly reduced rates, platelet dense granules deficient in critical components, such as serotonin and adenine nucleotides, leading to functionally abnormal platelets and prolonged bleeding times, and mast cell granules undergoing unregulated 'kiss-and-run' fusion at the plasma membrane.</text>
</comment>
<keyword id="KW-0963">Cytoplasm</keyword>
<keyword id="KW-0225">Disease variant</keyword>
<keyword id="KW-0256">Endoplasmic reticulum</keyword>
<keyword id="KW-0967">Endosome</keyword>
<keyword id="KW-0458">Lysosome</keyword>
<keyword id="KW-0472">Membrane</keyword>
<keyword id="KW-0492">Microsome</keyword>
<keyword id="KW-1185">Reference proteome</keyword>
<gene>
    <name type="primary">Hps6</name>
    <name type="synonym">Ru</name>
</gene>
<proteinExistence type="evidence at protein level"/>
<sequence>MKRAGTLRLLSDLSNFTGAARLRELLAGDPAVLVRCSPDGRHLLLLRPPGSPAPQLLVAVRGPGLPLERAWPEGDPSPLDVFFVPWLARPALILVWESGLAEVWGVGMEPGWKLLQSTELCPDGGARVMAVAATRGRLVWCEERQPGVKDQPEQLSTAFSHRVCFKTLETSGEAGTKLGCTHILLHHCPLFGLIASRKDLFLVPTTNTWSGVAHLLLIWSPSKGKVIVAAPSLGLSHSKSLNPKQGDTWDFRTLLRGLPGFLSPREPLAVHTWAPSSQGLLLLDLKGKVSLVQCHGGTRTVGILQEAPVSLKGSAALGTFHGTLACVLGSTLELLDMSSGRLLEKKVLSTDRVHLLEPPAPGMKNEEELETRGALRLLSALGLFCVCWETPQGLELPSDKDLVFEEACGYYQRRSLRGTQLTPEELRHNSMFRAPQALASILQGHLPPSTLLTTLRAELRDYRSIEQLKAQLVAGDDEEAGWTELAEHEVARLLRTQLTGDQLAQFNTIFQALPTAAWGATLQALQLQPDRSGRLRSQAPPDVWKKVLRAPTAGKEHPNGILPPFELLCQCLGQLEPQWLPPFVKLAQQQGGPGWGAEGPSLPLYRRALAVLGEEGKRPEALELELLLGSGRPKAVLQAVRQLIKKEEWERALEAGLALDASSPLLRSEIFKLLLAEFAQHRRLDAHLPLLCRLCPPEVAPHELLLLLRTHLPDDEGTTPFPEPGAEPPLTVGLVRALLEQTGAQGRPSGPVQSTYEDILWDPGTPPPTPPRGPTASLPASDHPGQEAWVPPGQGLGAADVGVHL</sequence>
<name>HPS6_MOUSE</name>
<feature type="chain" id="PRO_0000084057" description="BLOC-2 complex member HPS6">
    <location>
        <begin position="1"/>
        <end position="805"/>
    </location>
</feature>
<feature type="region of interest" description="Disordered" evidence="2">
    <location>
        <begin position="743"/>
        <end position="805"/>
    </location>
</feature>
<feature type="compositionally biased region" description="Pro residues" evidence="2">
    <location>
        <begin position="764"/>
        <end position="773"/>
    </location>
</feature>
<feature type="sequence variant" description="In allele ru; HPS-like mutant." evidence="3">
    <location>
        <begin position="187"/>
        <end position="189"/>
    </location>
</feature>
<feature type="sequence conflict" description="In Ref. 2; BAC27030." evidence="6" ref="2">
    <original>R</original>
    <variation>S</variation>
    <location>
        <position position="137"/>
    </location>
</feature>
<feature type="sequence conflict" description="In Ref. 3; AAH34055." evidence="6" ref="3">
    <original>F</original>
    <variation>L</variation>
    <location>
        <position position="384"/>
    </location>
</feature>
<feature type="sequence conflict" description="In Ref. 2; BAC27030." evidence="6" ref="2">
    <original>R</original>
    <variation>G</variation>
    <location>
        <position position="667"/>
    </location>
</feature>
<protein>
    <recommendedName>
        <fullName evidence="6">BLOC-2 complex member HPS6</fullName>
    </recommendedName>
    <alternativeName>
        <fullName>Hermansky-Pudlak syndrome 6 protein homolog</fullName>
    </alternativeName>
    <alternativeName>
        <fullName>Ruby-eye protein</fullName>
        <shortName>Ru</shortName>
    </alternativeName>
</protein>
<reference key="1">
    <citation type="journal article" date="2003" name="Nat. Genet.">
        <title>Ru2 and Ru encode mouse orthologs of the genes mutated in human Hermansky-Pudlak syndrome types 5 and 6.</title>
        <authorList>
            <person name="Zhang Q."/>
            <person name="Zhao B."/>
            <person name="Li W."/>
            <person name="Oiso N."/>
            <person name="Novak E.K."/>
            <person name="Rusiniak M.E."/>
            <person name="Gautam R."/>
            <person name="Chintala S."/>
            <person name="O'Brien E.P."/>
            <person name="Zhang Y."/>
            <person name="Roe B.A."/>
            <person name="Elliott R.W."/>
            <person name="Eicher E.M."/>
            <person name="Liang P."/>
            <person name="Kratz C."/>
            <person name="Legius E."/>
            <person name="Spritz R.A."/>
            <person name="O'Sullivan T.N."/>
            <person name="Copeland N.G."/>
            <person name="Jenkins N.A."/>
            <person name="Swank R.T."/>
        </authorList>
    </citation>
    <scope>NUCLEOTIDE SEQUENCE [MRNA]</scope>
    <scope>VARIANT RU 187-HIS--PRO-189 DEL</scope>
    <scope>DISEASE</scope>
    <source>
        <strain>C57BL/6J</strain>
        <tissue>Kidney</tissue>
    </source>
</reference>
<reference key="2">
    <citation type="journal article" date="2005" name="Science">
        <title>The transcriptional landscape of the mammalian genome.</title>
        <authorList>
            <person name="Carninci P."/>
            <person name="Kasukawa T."/>
            <person name="Katayama S."/>
            <person name="Gough J."/>
            <person name="Frith M.C."/>
            <person name="Maeda N."/>
            <person name="Oyama R."/>
            <person name="Ravasi T."/>
            <person name="Lenhard B."/>
            <person name="Wells C."/>
            <person name="Kodzius R."/>
            <person name="Shimokawa K."/>
            <person name="Bajic V.B."/>
            <person name="Brenner S.E."/>
            <person name="Batalov S."/>
            <person name="Forrest A.R."/>
            <person name="Zavolan M."/>
            <person name="Davis M.J."/>
            <person name="Wilming L.G."/>
            <person name="Aidinis V."/>
            <person name="Allen J.E."/>
            <person name="Ambesi-Impiombato A."/>
            <person name="Apweiler R."/>
            <person name="Aturaliya R.N."/>
            <person name="Bailey T.L."/>
            <person name="Bansal M."/>
            <person name="Baxter L."/>
            <person name="Beisel K.W."/>
            <person name="Bersano T."/>
            <person name="Bono H."/>
            <person name="Chalk A.M."/>
            <person name="Chiu K.P."/>
            <person name="Choudhary V."/>
            <person name="Christoffels A."/>
            <person name="Clutterbuck D.R."/>
            <person name="Crowe M.L."/>
            <person name="Dalla E."/>
            <person name="Dalrymple B.P."/>
            <person name="de Bono B."/>
            <person name="Della Gatta G."/>
            <person name="di Bernardo D."/>
            <person name="Down T."/>
            <person name="Engstrom P."/>
            <person name="Fagiolini M."/>
            <person name="Faulkner G."/>
            <person name="Fletcher C.F."/>
            <person name="Fukushima T."/>
            <person name="Furuno M."/>
            <person name="Futaki S."/>
            <person name="Gariboldi M."/>
            <person name="Georgii-Hemming P."/>
            <person name="Gingeras T.R."/>
            <person name="Gojobori T."/>
            <person name="Green R.E."/>
            <person name="Gustincich S."/>
            <person name="Harbers M."/>
            <person name="Hayashi Y."/>
            <person name="Hensch T.K."/>
            <person name="Hirokawa N."/>
            <person name="Hill D."/>
            <person name="Huminiecki L."/>
            <person name="Iacono M."/>
            <person name="Ikeo K."/>
            <person name="Iwama A."/>
            <person name="Ishikawa T."/>
            <person name="Jakt M."/>
            <person name="Kanapin A."/>
            <person name="Katoh M."/>
            <person name="Kawasawa Y."/>
            <person name="Kelso J."/>
            <person name="Kitamura H."/>
            <person name="Kitano H."/>
            <person name="Kollias G."/>
            <person name="Krishnan S.P."/>
            <person name="Kruger A."/>
            <person name="Kummerfeld S.K."/>
            <person name="Kurochkin I.V."/>
            <person name="Lareau L.F."/>
            <person name="Lazarevic D."/>
            <person name="Lipovich L."/>
            <person name="Liu J."/>
            <person name="Liuni S."/>
            <person name="McWilliam S."/>
            <person name="Madan Babu M."/>
            <person name="Madera M."/>
            <person name="Marchionni L."/>
            <person name="Matsuda H."/>
            <person name="Matsuzawa S."/>
            <person name="Miki H."/>
            <person name="Mignone F."/>
            <person name="Miyake S."/>
            <person name="Morris K."/>
            <person name="Mottagui-Tabar S."/>
            <person name="Mulder N."/>
            <person name="Nakano N."/>
            <person name="Nakauchi H."/>
            <person name="Ng P."/>
            <person name="Nilsson R."/>
            <person name="Nishiguchi S."/>
            <person name="Nishikawa S."/>
            <person name="Nori F."/>
            <person name="Ohara O."/>
            <person name="Okazaki Y."/>
            <person name="Orlando V."/>
            <person name="Pang K.C."/>
            <person name="Pavan W.J."/>
            <person name="Pavesi G."/>
            <person name="Pesole G."/>
            <person name="Petrovsky N."/>
            <person name="Piazza S."/>
            <person name="Reed J."/>
            <person name="Reid J.F."/>
            <person name="Ring B.Z."/>
            <person name="Ringwald M."/>
            <person name="Rost B."/>
            <person name="Ruan Y."/>
            <person name="Salzberg S.L."/>
            <person name="Sandelin A."/>
            <person name="Schneider C."/>
            <person name="Schoenbach C."/>
            <person name="Sekiguchi K."/>
            <person name="Semple C.A."/>
            <person name="Seno S."/>
            <person name="Sessa L."/>
            <person name="Sheng Y."/>
            <person name="Shibata Y."/>
            <person name="Shimada H."/>
            <person name="Shimada K."/>
            <person name="Silva D."/>
            <person name="Sinclair B."/>
            <person name="Sperling S."/>
            <person name="Stupka E."/>
            <person name="Sugiura K."/>
            <person name="Sultana R."/>
            <person name="Takenaka Y."/>
            <person name="Taki K."/>
            <person name="Tammoja K."/>
            <person name="Tan S.L."/>
            <person name="Tang S."/>
            <person name="Taylor M.S."/>
            <person name="Tegner J."/>
            <person name="Teichmann S.A."/>
            <person name="Ueda H.R."/>
            <person name="van Nimwegen E."/>
            <person name="Verardo R."/>
            <person name="Wei C.L."/>
            <person name="Yagi K."/>
            <person name="Yamanishi H."/>
            <person name="Zabarovsky E."/>
            <person name="Zhu S."/>
            <person name="Zimmer A."/>
            <person name="Hide W."/>
            <person name="Bult C."/>
            <person name="Grimmond S.M."/>
            <person name="Teasdale R.D."/>
            <person name="Liu E.T."/>
            <person name="Brusic V."/>
            <person name="Quackenbush J."/>
            <person name="Wahlestedt C."/>
            <person name="Mattick J.S."/>
            <person name="Hume D.A."/>
            <person name="Kai C."/>
            <person name="Sasaki D."/>
            <person name="Tomaru Y."/>
            <person name="Fukuda S."/>
            <person name="Kanamori-Katayama M."/>
            <person name="Suzuki M."/>
            <person name="Aoki J."/>
            <person name="Arakawa T."/>
            <person name="Iida J."/>
            <person name="Imamura K."/>
            <person name="Itoh M."/>
            <person name="Kato T."/>
            <person name="Kawaji H."/>
            <person name="Kawagashira N."/>
            <person name="Kawashima T."/>
            <person name="Kojima M."/>
            <person name="Kondo S."/>
            <person name="Konno H."/>
            <person name="Nakano K."/>
            <person name="Ninomiya N."/>
            <person name="Nishio T."/>
            <person name="Okada M."/>
            <person name="Plessy C."/>
            <person name="Shibata K."/>
            <person name="Shiraki T."/>
            <person name="Suzuki S."/>
            <person name="Tagami M."/>
            <person name="Waki K."/>
            <person name="Watahiki A."/>
            <person name="Okamura-Oho Y."/>
            <person name="Suzuki H."/>
            <person name="Kawai J."/>
            <person name="Hayashizaki Y."/>
        </authorList>
    </citation>
    <scope>NUCLEOTIDE SEQUENCE [LARGE SCALE MRNA]</scope>
    <source>
        <strain>C57BL/6J</strain>
        <tissue>Aorta</tissue>
        <tissue>Pituitary</tissue>
        <tissue>Vein</tissue>
    </source>
</reference>
<reference key="3">
    <citation type="journal article" date="2004" name="Genome Res.">
        <title>The status, quality, and expansion of the NIH full-length cDNA project: the Mammalian Gene Collection (MGC).</title>
        <authorList>
            <consortium name="The MGC Project Team"/>
        </authorList>
    </citation>
    <scope>NUCLEOTIDE SEQUENCE [LARGE SCALE MRNA]</scope>
    <source>
        <strain>FVB/N</strain>
    </source>
</reference>
<reference key="4">
    <citation type="journal article" date="2009" name="J. Biol. Chem.">
        <title>Hermansky-Pudlak syndrome protein complexes associate with phosphatidylinositol 4-kinase type II alpha in neuronal and non-neuronal cells.</title>
        <authorList>
            <person name="Salazar G."/>
            <person name="Zlatic S."/>
            <person name="Craige B."/>
            <person name="Peden A.A."/>
            <person name="Pohl J."/>
            <person name="Faundez V."/>
        </authorList>
    </citation>
    <scope>INTERACTION WITH AP-3 COMPLEX</scope>
</reference>
<reference key="5">
    <citation type="journal article" date="2010" name="Cell">
        <title>A tissue-specific atlas of mouse protein phosphorylation and expression.</title>
        <authorList>
            <person name="Huttlin E.L."/>
            <person name="Jedrychowski M.P."/>
            <person name="Elias J.E."/>
            <person name="Goswami T."/>
            <person name="Rad R."/>
            <person name="Beausoleil S.A."/>
            <person name="Villen J."/>
            <person name="Haas W."/>
            <person name="Sowa M.E."/>
            <person name="Gygi S.P."/>
        </authorList>
    </citation>
    <scope>IDENTIFICATION BY MASS SPECTROMETRY [LARGE SCALE ANALYSIS]</scope>
    <source>
        <tissue>Spleen</tissue>
    </source>
</reference>
<reference key="6">
    <citation type="journal article" date="2014" name="J. Cell Sci.">
        <title>HPS6 interacts with dynactin p150Glued to mediate retrograde trafficking and maturation of lysosomes.</title>
        <authorList>
            <person name="Li K."/>
            <person name="Yang L."/>
            <person name="Zhang C."/>
            <person name="Niu Y."/>
            <person name="Li W."/>
            <person name="Liu J.J."/>
        </authorList>
    </citation>
    <scope>FUNCTION</scope>
    <scope>INTERACTION WITH DCTN1</scope>
</reference>
<evidence type="ECO:0000250" key="1">
    <source>
        <dbReference type="UniProtKB" id="Q86YV9"/>
    </source>
</evidence>
<evidence type="ECO:0000256" key="2">
    <source>
        <dbReference type="SAM" id="MobiDB-lite"/>
    </source>
</evidence>
<evidence type="ECO:0000269" key="3">
    <source>
    </source>
</evidence>
<evidence type="ECO:0000269" key="4">
    <source>
    </source>
</evidence>
<evidence type="ECO:0000269" key="5">
    <source>
    </source>
</evidence>
<evidence type="ECO:0000305" key="6"/>
<accession>Q8BLY7</accession>
<accession>Q3TWQ8</accession>
<accession>Q8BML5</accession>
<accession>Q8CIA3</accession>
<organism>
    <name type="scientific">Mus musculus</name>
    <name type="common">Mouse</name>
    <dbReference type="NCBI Taxonomy" id="10090"/>
    <lineage>
        <taxon>Eukaryota</taxon>
        <taxon>Metazoa</taxon>
        <taxon>Chordata</taxon>
        <taxon>Craniata</taxon>
        <taxon>Vertebrata</taxon>
        <taxon>Euteleostomi</taxon>
        <taxon>Mammalia</taxon>
        <taxon>Eutheria</taxon>
        <taxon>Euarchontoglires</taxon>
        <taxon>Glires</taxon>
        <taxon>Rodentia</taxon>
        <taxon>Myomorpha</taxon>
        <taxon>Muroidea</taxon>
        <taxon>Muridae</taxon>
        <taxon>Murinae</taxon>
        <taxon>Mus</taxon>
        <taxon>Mus</taxon>
    </lineage>
</organism>
<dbReference type="EMBL" id="AF536239">
    <property type="protein sequence ID" value="AAO25966.1"/>
    <property type="molecule type" value="mRNA"/>
</dbReference>
<dbReference type="EMBL" id="AK030582">
    <property type="protein sequence ID" value="BAC27030.1"/>
    <property type="molecule type" value="mRNA"/>
</dbReference>
<dbReference type="EMBL" id="AK040849">
    <property type="protein sequence ID" value="BAC30719.1"/>
    <property type="molecule type" value="mRNA"/>
</dbReference>
<dbReference type="EMBL" id="AK159588">
    <property type="protein sequence ID" value="BAE35208.1"/>
    <property type="molecule type" value="mRNA"/>
</dbReference>
<dbReference type="EMBL" id="BC034055">
    <property type="protein sequence ID" value="AAH34055.1"/>
    <property type="molecule type" value="mRNA"/>
</dbReference>
<dbReference type="CCDS" id="CCDS29869.1"/>
<dbReference type="RefSeq" id="NP_789742.2">
    <property type="nucleotide sequence ID" value="NM_176785.3"/>
</dbReference>
<dbReference type="BioGRID" id="203035">
    <property type="interactions" value="1"/>
</dbReference>
<dbReference type="ComplexPortal" id="CPX-5084">
    <property type="entry name" value="BLOC-2 complex"/>
</dbReference>
<dbReference type="CORUM" id="Q8BLY7"/>
<dbReference type="FunCoup" id="Q8BLY7">
    <property type="interactions" value="117"/>
</dbReference>
<dbReference type="STRING" id="10090.ENSMUSP00000096991"/>
<dbReference type="GlyGen" id="Q8BLY7">
    <property type="glycosylation" value="2 sites"/>
</dbReference>
<dbReference type="iPTMnet" id="Q8BLY7"/>
<dbReference type="PhosphoSitePlus" id="Q8BLY7"/>
<dbReference type="jPOST" id="Q8BLY7"/>
<dbReference type="PaxDb" id="10090-ENSMUSP00000096991"/>
<dbReference type="PeptideAtlas" id="Q8BLY7"/>
<dbReference type="ProteomicsDB" id="273169"/>
<dbReference type="Pumba" id="Q8BLY7"/>
<dbReference type="Antibodypedia" id="31371">
    <property type="antibodies" value="141 antibodies from 28 providers"/>
</dbReference>
<dbReference type="Ensembl" id="ENSMUST00000099393.4">
    <property type="protein sequence ID" value="ENSMUSP00000096991.3"/>
    <property type="gene ID" value="ENSMUSG00000074811.4"/>
</dbReference>
<dbReference type="GeneID" id="20170"/>
<dbReference type="KEGG" id="mmu:20170"/>
<dbReference type="UCSC" id="uc008hrx.2">
    <property type="organism name" value="mouse"/>
</dbReference>
<dbReference type="AGR" id="MGI:2181763"/>
<dbReference type="CTD" id="79803"/>
<dbReference type="MGI" id="MGI:2181763">
    <property type="gene designation" value="Hps6"/>
</dbReference>
<dbReference type="VEuPathDB" id="HostDB:ENSMUSG00000074811"/>
<dbReference type="eggNOG" id="ENOG502QSBH">
    <property type="taxonomic scope" value="Eukaryota"/>
</dbReference>
<dbReference type="GeneTree" id="ENSGT00390000001546"/>
<dbReference type="HOGENOM" id="CLU_019081_0_0_1"/>
<dbReference type="InParanoid" id="Q8BLY7"/>
<dbReference type="OMA" id="RAWPAGH"/>
<dbReference type="OrthoDB" id="8581967at2759"/>
<dbReference type="TreeFam" id="TF331635"/>
<dbReference type="BioGRID-ORCS" id="20170">
    <property type="hits" value="5 hits in 77 CRISPR screens"/>
</dbReference>
<dbReference type="PRO" id="PR:Q8BLY7"/>
<dbReference type="Proteomes" id="UP000000589">
    <property type="component" value="Chromosome 19"/>
</dbReference>
<dbReference type="RNAct" id="Q8BLY7">
    <property type="molecule type" value="protein"/>
</dbReference>
<dbReference type="Bgee" id="ENSMUSG00000074811">
    <property type="expression patterns" value="Expressed in primary oocyte and 113 other cell types or tissues"/>
</dbReference>
<dbReference type="GO" id="GO:0031084">
    <property type="term" value="C:BLOC-2 complex"/>
    <property type="evidence" value="ECO:0000266"/>
    <property type="project" value="ComplexPortal"/>
</dbReference>
<dbReference type="GO" id="GO:0005829">
    <property type="term" value="C:cytosol"/>
    <property type="evidence" value="ECO:0007669"/>
    <property type="project" value="UniProtKB-SubCell"/>
</dbReference>
<dbReference type="GO" id="GO:0005769">
    <property type="term" value="C:early endosome"/>
    <property type="evidence" value="ECO:0000303"/>
    <property type="project" value="ComplexPortal"/>
</dbReference>
<dbReference type="GO" id="GO:0031901">
    <property type="term" value="C:early endosome membrane"/>
    <property type="evidence" value="ECO:0007669"/>
    <property type="project" value="UniProtKB-SubCell"/>
</dbReference>
<dbReference type="GO" id="GO:0005783">
    <property type="term" value="C:endoplasmic reticulum"/>
    <property type="evidence" value="ECO:0007669"/>
    <property type="project" value="UniProtKB-KW"/>
</dbReference>
<dbReference type="GO" id="GO:0005765">
    <property type="term" value="C:lysosomal membrane"/>
    <property type="evidence" value="ECO:0000250"/>
    <property type="project" value="UniProtKB"/>
</dbReference>
<dbReference type="GO" id="GO:0005654">
    <property type="term" value="C:nucleoplasm"/>
    <property type="evidence" value="ECO:0007669"/>
    <property type="project" value="Ensembl"/>
</dbReference>
<dbReference type="GO" id="GO:0030742">
    <property type="term" value="F:GTP-dependent protein binding"/>
    <property type="evidence" value="ECO:0007669"/>
    <property type="project" value="Ensembl"/>
</dbReference>
<dbReference type="GO" id="GO:0031267">
    <property type="term" value="F:small GTPase binding"/>
    <property type="evidence" value="ECO:0007669"/>
    <property type="project" value="Ensembl"/>
</dbReference>
<dbReference type="GO" id="GO:0007596">
    <property type="term" value="P:blood coagulation"/>
    <property type="evidence" value="ECO:0000315"/>
    <property type="project" value="MGI"/>
</dbReference>
<dbReference type="GO" id="GO:0046907">
    <property type="term" value="P:intracellular transport"/>
    <property type="evidence" value="ECO:0000303"/>
    <property type="project" value="ComplexPortal"/>
</dbReference>
<dbReference type="GO" id="GO:0055088">
    <property type="term" value="P:lipid homeostasis"/>
    <property type="evidence" value="ECO:0000315"/>
    <property type="project" value="MGI"/>
</dbReference>
<dbReference type="GO" id="GO:0006629">
    <property type="term" value="P:lipid metabolic process"/>
    <property type="evidence" value="ECO:0000315"/>
    <property type="project" value="MGI"/>
</dbReference>
<dbReference type="GO" id="GO:0032418">
    <property type="term" value="P:lysosome localization"/>
    <property type="evidence" value="ECO:0000315"/>
    <property type="project" value="UniProtKB"/>
</dbReference>
<dbReference type="GO" id="GO:1903232">
    <property type="term" value="P:melanosome assembly"/>
    <property type="evidence" value="ECO:0000303"/>
    <property type="project" value="ComplexPortal"/>
</dbReference>
<dbReference type="GO" id="GO:0043473">
    <property type="term" value="P:pigmentation"/>
    <property type="evidence" value="ECO:0000315"/>
    <property type="project" value="MGI"/>
</dbReference>
<dbReference type="GO" id="GO:0060155">
    <property type="term" value="P:platelet dense granule organization"/>
    <property type="evidence" value="ECO:0000303"/>
    <property type="project" value="ComplexPortal"/>
</dbReference>
<dbReference type="GO" id="GO:0072657">
    <property type="term" value="P:protein localization to membrane"/>
    <property type="evidence" value="ECO:0007669"/>
    <property type="project" value="Ensembl"/>
</dbReference>
<dbReference type="GO" id="GO:0009306">
    <property type="term" value="P:protein secretion"/>
    <property type="evidence" value="ECO:0000315"/>
    <property type="project" value="MGI"/>
</dbReference>
<dbReference type="InterPro" id="IPR017218">
    <property type="entry name" value="BLOC-2_complex_Hps6_subunit"/>
</dbReference>
<dbReference type="InterPro" id="IPR046822">
    <property type="entry name" value="HPS6_C"/>
</dbReference>
<dbReference type="InterPro" id="IPR046823">
    <property type="entry name" value="HPS6_N"/>
</dbReference>
<dbReference type="PANTHER" id="PTHR14696:SF2">
    <property type="entry name" value="BLOC-2 COMPLEX MEMBER HPS6"/>
    <property type="match status" value="1"/>
</dbReference>
<dbReference type="PANTHER" id="PTHR14696">
    <property type="entry name" value="HERMANSKY-PUDLAK SYNDROME 6 PROTEIN"/>
    <property type="match status" value="1"/>
</dbReference>
<dbReference type="Pfam" id="PF15702">
    <property type="entry name" value="HPS6"/>
    <property type="match status" value="1"/>
</dbReference>
<dbReference type="Pfam" id="PF20468">
    <property type="entry name" value="HPS6_C"/>
    <property type="match status" value="1"/>
</dbReference>
<dbReference type="PIRSF" id="PIRSF037476">
    <property type="entry name" value="BLOC-2_complex_Hps6"/>
    <property type="match status" value="1"/>
</dbReference>